<dbReference type="EMBL" id="U44759">
    <property type="protein sequence ID" value="AAA86906.1"/>
    <property type="molecule type" value="mRNA"/>
</dbReference>
<dbReference type="EMBL" id="FO081616">
    <property type="protein sequence ID" value="CCD72846.1"/>
    <property type="molecule type" value="Genomic_DNA"/>
</dbReference>
<dbReference type="PIR" id="T16922">
    <property type="entry name" value="T16922"/>
</dbReference>
<dbReference type="RefSeq" id="NP_509076.1">
    <property type="nucleotide sequence ID" value="NM_076675.10"/>
</dbReference>
<dbReference type="SMR" id="Q27371"/>
<dbReference type="BioGRID" id="45844">
    <property type="interactions" value="13"/>
</dbReference>
<dbReference type="DIP" id="DIP-26592N"/>
<dbReference type="FunCoup" id="Q27371">
    <property type="interactions" value="9"/>
</dbReference>
<dbReference type="MINT" id="Q27371"/>
<dbReference type="STRING" id="6239.T22E5.5.1"/>
<dbReference type="PaxDb" id="6239-T22E5.5.1"/>
<dbReference type="PeptideAtlas" id="Q27371"/>
<dbReference type="EnsemblMetazoa" id="T22E5.5.1">
    <property type="protein sequence ID" value="T22E5.5.1"/>
    <property type="gene ID" value="WBGene00003495"/>
</dbReference>
<dbReference type="GeneID" id="180914"/>
<dbReference type="KEGG" id="cel:CELE_T22E5.5"/>
<dbReference type="UCSC" id="T22E5.5.1">
    <property type="organism name" value="c. elegans"/>
</dbReference>
<dbReference type="AGR" id="WB:WBGene00003495"/>
<dbReference type="CTD" id="180914"/>
<dbReference type="WormBase" id="T22E5.5">
    <property type="protein sequence ID" value="CE04994"/>
    <property type="gene ID" value="WBGene00003495"/>
    <property type="gene designation" value="mup-2"/>
</dbReference>
<dbReference type="eggNOG" id="KOG3634">
    <property type="taxonomic scope" value="Eukaryota"/>
</dbReference>
<dbReference type="HOGENOM" id="CLU_047178_0_0_1"/>
<dbReference type="InParanoid" id="Q27371"/>
<dbReference type="OMA" id="RIMFEKP"/>
<dbReference type="OrthoDB" id="330499at2759"/>
<dbReference type="PRO" id="PR:Q27371"/>
<dbReference type="Proteomes" id="UP000001940">
    <property type="component" value="Chromosome X"/>
</dbReference>
<dbReference type="Bgee" id="WBGene00003495">
    <property type="expression patterns" value="Expressed in larva and 4 other cell types or tissues"/>
</dbReference>
<dbReference type="GO" id="GO:0005861">
    <property type="term" value="C:troponin complex"/>
    <property type="evidence" value="ECO:0000250"/>
    <property type="project" value="WormBase"/>
</dbReference>
<dbReference type="GO" id="GO:0005523">
    <property type="term" value="F:tropomyosin binding"/>
    <property type="evidence" value="ECO:0000318"/>
    <property type="project" value="GO_Central"/>
</dbReference>
<dbReference type="GO" id="GO:0007413">
    <property type="term" value="P:axonal fasciculation"/>
    <property type="evidence" value="ECO:0000315"/>
    <property type="project" value="WormBase"/>
</dbReference>
<dbReference type="GO" id="GO:0048598">
    <property type="term" value="P:embryonic morphogenesis"/>
    <property type="evidence" value="ECO:0000315"/>
    <property type="project" value="WormBase"/>
</dbReference>
<dbReference type="GO" id="GO:0007526">
    <property type="term" value="P:larval somatic muscle development"/>
    <property type="evidence" value="ECO:0000315"/>
    <property type="project" value="WormBase"/>
</dbReference>
<dbReference type="GO" id="GO:0006936">
    <property type="term" value="P:muscle contraction"/>
    <property type="evidence" value="ECO:0000318"/>
    <property type="project" value="GO_Central"/>
</dbReference>
<dbReference type="GO" id="GO:0030728">
    <property type="term" value="P:ovulation"/>
    <property type="evidence" value="ECO:0000315"/>
    <property type="project" value="WormBase"/>
</dbReference>
<dbReference type="GO" id="GO:0006937">
    <property type="term" value="P:regulation of muscle contraction"/>
    <property type="evidence" value="ECO:0000315"/>
    <property type="project" value="WormBase"/>
</dbReference>
<dbReference type="GO" id="GO:0045214">
    <property type="term" value="P:sarcomere organization"/>
    <property type="evidence" value="ECO:0000315"/>
    <property type="project" value="WormBase"/>
</dbReference>
<dbReference type="FunFam" id="1.20.5.350:FF:000003">
    <property type="entry name" value="Troponin T isoform 5"/>
    <property type="match status" value="1"/>
</dbReference>
<dbReference type="Gene3D" id="1.20.5.350">
    <property type="match status" value="1"/>
</dbReference>
<dbReference type="InterPro" id="IPR027707">
    <property type="entry name" value="TNNT"/>
</dbReference>
<dbReference type="InterPro" id="IPR001978">
    <property type="entry name" value="Troponin"/>
</dbReference>
<dbReference type="InterPro" id="IPR038077">
    <property type="entry name" value="Troponin_sf"/>
</dbReference>
<dbReference type="PANTHER" id="PTHR11521">
    <property type="entry name" value="TROPONIN T"/>
    <property type="match status" value="1"/>
</dbReference>
<dbReference type="PANTHER" id="PTHR11521:SF30">
    <property type="entry name" value="TROPONIN T"/>
    <property type="match status" value="1"/>
</dbReference>
<dbReference type="Pfam" id="PF00992">
    <property type="entry name" value="Troponin"/>
    <property type="match status" value="1"/>
</dbReference>
<dbReference type="SUPFAM" id="SSF90250">
    <property type="entry name" value="Troponin coil-coiled subunits"/>
    <property type="match status" value="1"/>
</dbReference>
<organism>
    <name type="scientific">Caenorhabditis elegans</name>
    <dbReference type="NCBI Taxonomy" id="6239"/>
    <lineage>
        <taxon>Eukaryota</taxon>
        <taxon>Metazoa</taxon>
        <taxon>Ecdysozoa</taxon>
        <taxon>Nematoda</taxon>
        <taxon>Chromadorea</taxon>
        <taxon>Rhabditida</taxon>
        <taxon>Rhabditina</taxon>
        <taxon>Rhabditomorpha</taxon>
        <taxon>Rhabditoidea</taxon>
        <taxon>Rhabditidae</taxon>
        <taxon>Peloderinae</taxon>
        <taxon>Caenorhabditis</taxon>
    </lineage>
</organism>
<protein>
    <recommendedName>
        <fullName>Troponin T</fullName>
    </recommendedName>
</protein>
<name>TNNT_CAEEL</name>
<gene>
    <name type="primary">mup-2</name>
    <name type="ORF">T22E5.5</name>
</gene>
<keyword id="KW-1185">Reference proteome</keyword>
<proteinExistence type="evidence at transcript level"/>
<sequence>MSDEEEVYSDEEVEEEEVEETEEAPAEAEEPEETTEEVVAPPEVKERRAPVQEEKPPAEMTEAEIAMLAAKKRHEEEEAAKLLDYEQRRVLEKEQIEQELRELKEKQEKRRAEREEDERQFAERRRQDDERRRKEEDERKAKADAEKIRKNEEKVRRQQMMAGAFNGRVEAGAGRNFTVASKGDQAAQFGNLAQAKGGKDVMSKEQMEDAKRNFLAAVCRVQDVSGLLPNDLKERIRGLHARIVKLEAEKYDLEKRRERQDYDMKELHERQRQAARNKALKKGLDPEEAASSVHPPKITTASKFDRQTDRRSYGDRRYLFENPEEEKQASLVRGTGRPPAEWGRKQNEELEQIRKNLEPPKYVEQVKVEGARAPVEPVPLFVPTDDFEPQQVTEDPNVGEEVVVE</sequence>
<accession>Q27371</accession>
<comment type="function">
    <text evidence="1">Troponin T is the tropomyosin-binding subunit of troponin, the thin filament regulatory complex which confers calcium-sensitivity to muscle actomyosin ATPase activity.</text>
</comment>
<comment type="similarity">
    <text evidence="3">Belongs to the troponin T family.</text>
</comment>
<feature type="chain" id="PRO_0000186187" description="Troponin T">
    <location>
        <begin position="1"/>
        <end position="405"/>
    </location>
</feature>
<feature type="region of interest" description="Disordered" evidence="2">
    <location>
        <begin position="1"/>
        <end position="77"/>
    </location>
</feature>
<feature type="region of interest" description="Disordered" evidence="2">
    <location>
        <begin position="100"/>
        <end position="156"/>
    </location>
</feature>
<feature type="region of interest" description="Disordered" evidence="2">
    <location>
        <begin position="262"/>
        <end position="359"/>
    </location>
</feature>
<feature type="region of interest" description="Disordered" evidence="2">
    <location>
        <begin position="377"/>
        <end position="405"/>
    </location>
</feature>
<feature type="compositionally biased region" description="Acidic residues" evidence="2">
    <location>
        <begin position="1"/>
        <end position="36"/>
    </location>
</feature>
<feature type="compositionally biased region" description="Basic and acidic residues" evidence="2">
    <location>
        <begin position="43"/>
        <end position="57"/>
    </location>
</feature>
<feature type="compositionally biased region" description="Basic and acidic residues" evidence="2">
    <location>
        <begin position="262"/>
        <end position="272"/>
    </location>
</feature>
<feature type="compositionally biased region" description="Basic and acidic residues" evidence="2">
    <location>
        <begin position="303"/>
        <end position="319"/>
    </location>
</feature>
<feature type="compositionally biased region" description="Basic and acidic residues" evidence="2">
    <location>
        <begin position="342"/>
        <end position="358"/>
    </location>
</feature>
<evidence type="ECO:0000250" key="1"/>
<evidence type="ECO:0000256" key="2">
    <source>
        <dbReference type="SAM" id="MobiDB-lite"/>
    </source>
</evidence>
<evidence type="ECO:0000305" key="3"/>
<reference key="1">
    <citation type="journal article" date="1996" name="J. Cell Biol.">
        <title>Developmental genetic analysis of troponin T mutations in striated and nonstriated muscle cells of Caenorhabditis elegans.</title>
        <authorList>
            <person name="Myers C.D."/>
            <person name="Goh P.-Y."/>
            <person name="Allen T.S."/>
            <person name="Bucher E.A."/>
            <person name="Bogaert T."/>
        </authorList>
    </citation>
    <scope>NUCLEOTIDE SEQUENCE [MRNA]</scope>
    <source>
        <strain>Bristol N2</strain>
        <tissue>Muscle</tissue>
    </source>
</reference>
<reference key="2">
    <citation type="journal article" date="1998" name="Science">
        <title>Genome sequence of the nematode C. elegans: a platform for investigating biology.</title>
        <authorList>
            <consortium name="The C. elegans sequencing consortium"/>
        </authorList>
    </citation>
    <scope>NUCLEOTIDE SEQUENCE [LARGE SCALE GENOMIC DNA]</scope>
    <source>
        <strain>Bristol N2</strain>
    </source>
</reference>